<feature type="chain" id="PRO_1000193983" description="Large ribosomal subunit protein bL20">
    <location>
        <begin position="1"/>
        <end position="119"/>
    </location>
</feature>
<evidence type="ECO:0000255" key="1">
    <source>
        <dbReference type="HAMAP-Rule" id="MF_00382"/>
    </source>
</evidence>
<evidence type="ECO:0000305" key="2"/>
<name>RL20_STRU0</name>
<accession>B9DU42</accession>
<dbReference type="EMBL" id="AM946015">
    <property type="protein sequence ID" value="CAR41626.1"/>
    <property type="molecule type" value="Genomic_DNA"/>
</dbReference>
<dbReference type="RefSeq" id="WP_012658230.1">
    <property type="nucleotide sequence ID" value="NC_012004.1"/>
</dbReference>
<dbReference type="SMR" id="B9DU42"/>
<dbReference type="STRING" id="218495.SUB0713"/>
<dbReference type="KEGG" id="sub:SUB0713"/>
<dbReference type="eggNOG" id="COG0292">
    <property type="taxonomic scope" value="Bacteria"/>
</dbReference>
<dbReference type="HOGENOM" id="CLU_123265_0_1_9"/>
<dbReference type="OrthoDB" id="9808966at2"/>
<dbReference type="Proteomes" id="UP000000449">
    <property type="component" value="Chromosome"/>
</dbReference>
<dbReference type="GO" id="GO:1990904">
    <property type="term" value="C:ribonucleoprotein complex"/>
    <property type="evidence" value="ECO:0007669"/>
    <property type="project" value="UniProtKB-KW"/>
</dbReference>
<dbReference type="GO" id="GO:0005840">
    <property type="term" value="C:ribosome"/>
    <property type="evidence" value="ECO:0007669"/>
    <property type="project" value="UniProtKB-KW"/>
</dbReference>
<dbReference type="GO" id="GO:0019843">
    <property type="term" value="F:rRNA binding"/>
    <property type="evidence" value="ECO:0007669"/>
    <property type="project" value="UniProtKB-UniRule"/>
</dbReference>
<dbReference type="GO" id="GO:0003735">
    <property type="term" value="F:structural constituent of ribosome"/>
    <property type="evidence" value="ECO:0007669"/>
    <property type="project" value="InterPro"/>
</dbReference>
<dbReference type="GO" id="GO:0000027">
    <property type="term" value="P:ribosomal large subunit assembly"/>
    <property type="evidence" value="ECO:0007669"/>
    <property type="project" value="UniProtKB-UniRule"/>
</dbReference>
<dbReference type="GO" id="GO:0006412">
    <property type="term" value="P:translation"/>
    <property type="evidence" value="ECO:0007669"/>
    <property type="project" value="InterPro"/>
</dbReference>
<dbReference type="CDD" id="cd07026">
    <property type="entry name" value="Ribosomal_L20"/>
    <property type="match status" value="1"/>
</dbReference>
<dbReference type="FunFam" id="1.10.1900.20:FF:000001">
    <property type="entry name" value="50S ribosomal protein L20"/>
    <property type="match status" value="1"/>
</dbReference>
<dbReference type="Gene3D" id="6.10.160.10">
    <property type="match status" value="1"/>
</dbReference>
<dbReference type="Gene3D" id="1.10.1900.20">
    <property type="entry name" value="Ribosomal protein L20"/>
    <property type="match status" value="1"/>
</dbReference>
<dbReference type="HAMAP" id="MF_00382">
    <property type="entry name" value="Ribosomal_bL20"/>
    <property type="match status" value="1"/>
</dbReference>
<dbReference type="InterPro" id="IPR005813">
    <property type="entry name" value="Ribosomal_bL20"/>
</dbReference>
<dbReference type="InterPro" id="IPR049946">
    <property type="entry name" value="RIBOSOMAL_L20_CS"/>
</dbReference>
<dbReference type="InterPro" id="IPR035566">
    <property type="entry name" value="Ribosomal_protein_bL20_C"/>
</dbReference>
<dbReference type="NCBIfam" id="TIGR01032">
    <property type="entry name" value="rplT_bact"/>
    <property type="match status" value="1"/>
</dbReference>
<dbReference type="PANTHER" id="PTHR10986">
    <property type="entry name" value="39S RIBOSOMAL PROTEIN L20"/>
    <property type="match status" value="1"/>
</dbReference>
<dbReference type="Pfam" id="PF00453">
    <property type="entry name" value="Ribosomal_L20"/>
    <property type="match status" value="1"/>
</dbReference>
<dbReference type="PRINTS" id="PR00062">
    <property type="entry name" value="RIBOSOMALL20"/>
</dbReference>
<dbReference type="SUPFAM" id="SSF74731">
    <property type="entry name" value="Ribosomal protein L20"/>
    <property type="match status" value="1"/>
</dbReference>
<dbReference type="PROSITE" id="PS00937">
    <property type="entry name" value="RIBOSOMAL_L20"/>
    <property type="match status" value="1"/>
</dbReference>
<reference key="1">
    <citation type="journal article" date="2009" name="BMC Genomics">
        <title>Evidence for niche adaptation in the genome of the bovine pathogen Streptococcus uberis.</title>
        <authorList>
            <person name="Ward P.N."/>
            <person name="Holden M.T.G."/>
            <person name="Leigh J.A."/>
            <person name="Lennard N."/>
            <person name="Bignell A."/>
            <person name="Barron A."/>
            <person name="Clark L."/>
            <person name="Quail M.A."/>
            <person name="Woodward J."/>
            <person name="Barrell B.G."/>
            <person name="Egan S.A."/>
            <person name="Field T.R."/>
            <person name="Maskell D."/>
            <person name="Kehoe M."/>
            <person name="Dowson C.G."/>
            <person name="Chanter N."/>
            <person name="Whatmore A.M."/>
            <person name="Bentley S.D."/>
            <person name="Parkhill J."/>
        </authorList>
    </citation>
    <scope>NUCLEOTIDE SEQUENCE [LARGE SCALE GENOMIC DNA]</scope>
    <source>
        <strain>ATCC BAA-854 / 0140J</strain>
    </source>
</reference>
<gene>
    <name evidence="1" type="primary">rplT</name>
    <name type="ordered locus">SUB0713</name>
</gene>
<protein>
    <recommendedName>
        <fullName evidence="1">Large ribosomal subunit protein bL20</fullName>
    </recommendedName>
    <alternativeName>
        <fullName evidence="2">50S ribosomal protein L20</fullName>
    </alternativeName>
</protein>
<keyword id="KW-1185">Reference proteome</keyword>
<keyword id="KW-0687">Ribonucleoprotein</keyword>
<keyword id="KW-0689">Ribosomal protein</keyword>
<keyword id="KW-0694">RNA-binding</keyword>
<keyword id="KW-0699">rRNA-binding</keyword>
<organism>
    <name type="scientific">Streptococcus uberis (strain ATCC BAA-854 / 0140J)</name>
    <dbReference type="NCBI Taxonomy" id="218495"/>
    <lineage>
        <taxon>Bacteria</taxon>
        <taxon>Bacillati</taxon>
        <taxon>Bacillota</taxon>
        <taxon>Bacilli</taxon>
        <taxon>Lactobacillales</taxon>
        <taxon>Streptococcaceae</taxon>
        <taxon>Streptococcus</taxon>
    </lineage>
</organism>
<proteinExistence type="inferred from homology"/>
<sequence length="119" mass="13695">MARVKGGVVSRKRRKRILKLAKGYYGAKHILFRTAKEQVMNSYYYAYRDRRQKKRDFRKLWITRINAAARMNGLSYSQLMHGLKLADIEVNRKMLADLAVNDAAGFTALADAAKDKLAK</sequence>
<comment type="function">
    <text evidence="1">Binds directly to 23S ribosomal RNA and is necessary for the in vitro assembly process of the 50S ribosomal subunit. It is not involved in the protein synthesizing functions of that subunit.</text>
</comment>
<comment type="similarity">
    <text evidence="1">Belongs to the bacterial ribosomal protein bL20 family.</text>
</comment>